<dbReference type="EMBL" id="AY078502">
    <property type="protein sequence ID" value="AAL85488.1"/>
    <property type="molecule type" value="mRNA"/>
</dbReference>
<dbReference type="EMBL" id="AY286071">
    <property type="protein sequence ID" value="AAP33393.1"/>
    <property type="molecule type" value="mRNA"/>
</dbReference>
<dbReference type="EMBL" id="AK017256">
    <property type="protein sequence ID" value="BAB30655.1"/>
    <property type="molecule type" value="mRNA"/>
</dbReference>
<dbReference type="EMBL" id="BC138399">
    <property type="protein sequence ID" value="AAI38400.1"/>
    <property type="molecule type" value="mRNA"/>
</dbReference>
<dbReference type="CCDS" id="CCDS28866.1">
    <molecule id="Q8K558-2"/>
</dbReference>
<dbReference type="CCDS" id="CCDS89114.1">
    <molecule id="Q8K558-1"/>
</dbReference>
<dbReference type="RefSeq" id="NP_001276380.1">
    <property type="nucleotide sequence ID" value="NM_001289451.1"/>
</dbReference>
<dbReference type="RefSeq" id="NP_001276386.1">
    <molecule id="Q8K558-1"/>
    <property type="nucleotide sequence ID" value="NM_001289457.1"/>
</dbReference>
<dbReference type="RefSeq" id="NP_082039.1">
    <molecule id="Q8K558-2"/>
    <property type="nucleotide sequence ID" value="NM_027763.2"/>
</dbReference>
<dbReference type="SMR" id="Q8K558"/>
<dbReference type="BioGRID" id="214639">
    <property type="interactions" value="1"/>
</dbReference>
<dbReference type="FunCoup" id="Q8K558">
    <property type="interactions" value="89"/>
</dbReference>
<dbReference type="IntAct" id="Q8K558">
    <property type="interactions" value="1"/>
</dbReference>
<dbReference type="MINT" id="Q8K558"/>
<dbReference type="STRING" id="10090.ENSMUSP00000153300"/>
<dbReference type="iPTMnet" id="Q8K558"/>
<dbReference type="PhosphoSitePlus" id="Q8K558"/>
<dbReference type="CPTAC" id="non-CPTAC-3886"/>
<dbReference type="PaxDb" id="10090-ENSMUSP00000024792"/>
<dbReference type="PeptideAtlas" id="Q8K558"/>
<dbReference type="ProteomicsDB" id="298234">
    <molecule id="Q8K558-1"/>
</dbReference>
<dbReference type="ProteomicsDB" id="298235">
    <molecule id="Q8K558-2"/>
</dbReference>
<dbReference type="Antibodypedia" id="2655">
    <property type="antibodies" value="289 antibodies from 30 providers"/>
</dbReference>
<dbReference type="DNASU" id="71326"/>
<dbReference type="Ensembl" id="ENSMUST00000024792.8">
    <molecule id="Q8K558-1"/>
    <property type="protein sequence ID" value="ENSMUSP00000024792.8"/>
    <property type="gene ID" value="ENSMUSG00000023993.8"/>
</dbReference>
<dbReference type="Ensembl" id="ENSMUST00000224001.2">
    <molecule id="Q8K558-2"/>
    <property type="protein sequence ID" value="ENSMUSP00000153300.2"/>
    <property type="gene ID" value="ENSMUSG00000023993.8"/>
</dbReference>
<dbReference type="GeneID" id="71326"/>
<dbReference type="KEGG" id="mmu:71326"/>
<dbReference type="UCSC" id="uc008cxm.2">
    <molecule id="Q8K558-2"/>
    <property type="organism name" value="mouse"/>
</dbReference>
<dbReference type="UCSC" id="uc008cxn.2">
    <molecule id="Q8K558-1"/>
    <property type="organism name" value="mouse"/>
</dbReference>
<dbReference type="AGR" id="MGI:1918576"/>
<dbReference type="CTD" id="340205"/>
<dbReference type="MGI" id="MGI:1918576">
    <property type="gene designation" value="Treml1"/>
</dbReference>
<dbReference type="VEuPathDB" id="HostDB:ENSMUSG00000023993"/>
<dbReference type="eggNOG" id="ENOG502SRZV">
    <property type="taxonomic scope" value="Eukaryota"/>
</dbReference>
<dbReference type="GeneTree" id="ENSGT00470000042300"/>
<dbReference type="HOGENOM" id="CLU_077694_1_0_1"/>
<dbReference type="InParanoid" id="Q8K558"/>
<dbReference type="OMA" id="WCQVLPE"/>
<dbReference type="OrthoDB" id="86722at9989"/>
<dbReference type="PhylomeDB" id="Q8K558"/>
<dbReference type="TreeFam" id="TF337145"/>
<dbReference type="Reactome" id="R-MMU-198933">
    <property type="pathway name" value="Immunoregulatory interactions between a Lymphoid and a non-Lymphoid cell"/>
</dbReference>
<dbReference type="BioGRID-ORCS" id="71326">
    <property type="hits" value="1 hit in 76 CRISPR screens"/>
</dbReference>
<dbReference type="PRO" id="PR:Q8K558"/>
<dbReference type="Proteomes" id="UP000000589">
    <property type="component" value="Chromosome 17"/>
</dbReference>
<dbReference type="RNAct" id="Q8K558">
    <property type="molecule type" value="protein"/>
</dbReference>
<dbReference type="Bgee" id="ENSMUSG00000023993">
    <property type="expression patterns" value="Expressed in bone marrow and 29 other cell types or tissues"/>
</dbReference>
<dbReference type="ExpressionAtlas" id="Q8K558">
    <property type="expression patterns" value="baseline and differential"/>
</dbReference>
<dbReference type="GO" id="GO:0009986">
    <property type="term" value="C:cell surface"/>
    <property type="evidence" value="ECO:0000314"/>
    <property type="project" value="UniProtKB"/>
</dbReference>
<dbReference type="GO" id="GO:0005829">
    <property type="term" value="C:cytosol"/>
    <property type="evidence" value="ECO:0007669"/>
    <property type="project" value="Ensembl"/>
</dbReference>
<dbReference type="GO" id="GO:0005794">
    <property type="term" value="C:Golgi apparatus"/>
    <property type="evidence" value="ECO:0007669"/>
    <property type="project" value="Ensembl"/>
</dbReference>
<dbReference type="GO" id="GO:0016607">
    <property type="term" value="C:nuclear speck"/>
    <property type="evidence" value="ECO:0007669"/>
    <property type="project" value="Ensembl"/>
</dbReference>
<dbReference type="GO" id="GO:0005886">
    <property type="term" value="C:plasma membrane"/>
    <property type="evidence" value="ECO:0007669"/>
    <property type="project" value="UniProtKB-SubCell"/>
</dbReference>
<dbReference type="GO" id="GO:0031091">
    <property type="term" value="C:platelet alpha granule"/>
    <property type="evidence" value="ECO:0000314"/>
    <property type="project" value="UniProtKB"/>
</dbReference>
<dbReference type="GO" id="GO:0038023">
    <property type="term" value="F:signaling receptor activity"/>
    <property type="evidence" value="ECO:0000304"/>
    <property type="project" value="MGI"/>
</dbReference>
<dbReference type="GO" id="GO:0009968">
    <property type="term" value="P:negative regulation of signal transduction"/>
    <property type="evidence" value="ECO:0000304"/>
    <property type="project" value="MGI"/>
</dbReference>
<dbReference type="GO" id="GO:0030168">
    <property type="term" value="P:platelet activation"/>
    <property type="evidence" value="ECO:0000270"/>
    <property type="project" value="UniProtKB"/>
</dbReference>
<dbReference type="GO" id="GO:0042060">
    <property type="term" value="P:wound healing"/>
    <property type="evidence" value="ECO:0000303"/>
    <property type="project" value="UniProtKB"/>
</dbReference>
<dbReference type="CDD" id="cd05716">
    <property type="entry name" value="IgV_pIgR_like"/>
    <property type="match status" value="1"/>
</dbReference>
<dbReference type="Gene3D" id="2.60.40.10">
    <property type="entry name" value="Immunoglobulins"/>
    <property type="match status" value="1"/>
</dbReference>
<dbReference type="InterPro" id="IPR036179">
    <property type="entry name" value="Ig-like_dom_sf"/>
</dbReference>
<dbReference type="InterPro" id="IPR013783">
    <property type="entry name" value="Ig-like_fold"/>
</dbReference>
<dbReference type="InterPro" id="IPR003599">
    <property type="entry name" value="Ig_sub"/>
</dbReference>
<dbReference type="InterPro" id="IPR052314">
    <property type="entry name" value="Immune_rcpt_domain"/>
</dbReference>
<dbReference type="PANTHER" id="PTHR16423">
    <property type="entry name" value="TREM-LIKE TRANSCRIPT PROTEIN"/>
    <property type="match status" value="1"/>
</dbReference>
<dbReference type="PANTHER" id="PTHR16423:SF6">
    <property type="entry name" value="TRIGGERING RECEPTOR EXPRESSED ON MYELOID CELLS 2-RELATED"/>
    <property type="match status" value="1"/>
</dbReference>
<dbReference type="SMART" id="SM00409">
    <property type="entry name" value="IG"/>
    <property type="match status" value="1"/>
</dbReference>
<dbReference type="SUPFAM" id="SSF48726">
    <property type="entry name" value="Immunoglobulin"/>
    <property type="match status" value="1"/>
</dbReference>
<evidence type="ECO:0000250" key="1"/>
<evidence type="ECO:0000250" key="2">
    <source>
        <dbReference type="UniProtKB" id="Q86YW5"/>
    </source>
</evidence>
<evidence type="ECO:0000255" key="3"/>
<evidence type="ECO:0000256" key="4">
    <source>
        <dbReference type="SAM" id="MobiDB-lite"/>
    </source>
</evidence>
<evidence type="ECO:0000269" key="5">
    <source>
    </source>
</evidence>
<evidence type="ECO:0000269" key="6">
    <source>
    </source>
</evidence>
<evidence type="ECO:0000303" key="7">
    <source>
    </source>
</evidence>
<evidence type="ECO:0007744" key="8">
    <source>
    </source>
</evidence>
<gene>
    <name type="primary">Treml1</name>
    <name type="synonym">Tlt1</name>
</gene>
<reference key="1">
    <citation type="journal article" date="2002" name="Blood">
        <title>Initial characterization of TREM-like transcript (TLT)-1: a putative inhibitory receptor within the TREM cluster.</title>
        <authorList>
            <person name="Washington A.V."/>
            <person name="Quigley L."/>
            <person name="McVicar D.W."/>
        </authorList>
    </citation>
    <scope>NUCLEOTIDE SEQUENCE [MRNA] (ISOFORMS 1 AND 2)</scope>
    <scope>FUNCTION</scope>
    <scope>PHOSPHORYLATION</scope>
    <scope>INTERACTION WITH PTPN6</scope>
    <scope>TISSUE SPECIFICITY</scope>
    <source>
        <strain>C57BL/6J</strain>
        <tissue>Bone marrow</tissue>
    </source>
</reference>
<reference key="2">
    <citation type="journal article" date="2005" name="Science">
        <title>The transcriptional landscape of the mammalian genome.</title>
        <authorList>
            <person name="Carninci P."/>
            <person name="Kasukawa T."/>
            <person name="Katayama S."/>
            <person name="Gough J."/>
            <person name="Frith M.C."/>
            <person name="Maeda N."/>
            <person name="Oyama R."/>
            <person name="Ravasi T."/>
            <person name="Lenhard B."/>
            <person name="Wells C."/>
            <person name="Kodzius R."/>
            <person name="Shimokawa K."/>
            <person name="Bajic V.B."/>
            <person name="Brenner S.E."/>
            <person name="Batalov S."/>
            <person name="Forrest A.R."/>
            <person name="Zavolan M."/>
            <person name="Davis M.J."/>
            <person name="Wilming L.G."/>
            <person name="Aidinis V."/>
            <person name="Allen J.E."/>
            <person name="Ambesi-Impiombato A."/>
            <person name="Apweiler R."/>
            <person name="Aturaliya R.N."/>
            <person name="Bailey T.L."/>
            <person name="Bansal M."/>
            <person name="Baxter L."/>
            <person name="Beisel K.W."/>
            <person name="Bersano T."/>
            <person name="Bono H."/>
            <person name="Chalk A.M."/>
            <person name="Chiu K.P."/>
            <person name="Choudhary V."/>
            <person name="Christoffels A."/>
            <person name="Clutterbuck D.R."/>
            <person name="Crowe M.L."/>
            <person name="Dalla E."/>
            <person name="Dalrymple B.P."/>
            <person name="de Bono B."/>
            <person name="Della Gatta G."/>
            <person name="di Bernardo D."/>
            <person name="Down T."/>
            <person name="Engstrom P."/>
            <person name="Fagiolini M."/>
            <person name="Faulkner G."/>
            <person name="Fletcher C.F."/>
            <person name="Fukushima T."/>
            <person name="Furuno M."/>
            <person name="Futaki S."/>
            <person name="Gariboldi M."/>
            <person name="Georgii-Hemming P."/>
            <person name="Gingeras T.R."/>
            <person name="Gojobori T."/>
            <person name="Green R.E."/>
            <person name="Gustincich S."/>
            <person name="Harbers M."/>
            <person name="Hayashi Y."/>
            <person name="Hensch T.K."/>
            <person name="Hirokawa N."/>
            <person name="Hill D."/>
            <person name="Huminiecki L."/>
            <person name="Iacono M."/>
            <person name="Ikeo K."/>
            <person name="Iwama A."/>
            <person name="Ishikawa T."/>
            <person name="Jakt M."/>
            <person name="Kanapin A."/>
            <person name="Katoh M."/>
            <person name="Kawasawa Y."/>
            <person name="Kelso J."/>
            <person name="Kitamura H."/>
            <person name="Kitano H."/>
            <person name="Kollias G."/>
            <person name="Krishnan S.P."/>
            <person name="Kruger A."/>
            <person name="Kummerfeld S.K."/>
            <person name="Kurochkin I.V."/>
            <person name="Lareau L.F."/>
            <person name="Lazarevic D."/>
            <person name="Lipovich L."/>
            <person name="Liu J."/>
            <person name="Liuni S."/>
            <person name="McWilliam S."/>
            <person name="Madan Babu M."/>
            <person name="Madera M."/>
            <person name="Marchionni L."/>
            <person name="Matsuda H."/>
            <person name="Matsuzawa S."/>
            <person name="Miki H."/>
            <person name="Mignone F."/>
            <person name="Miyake S."/>
            <person name="Morris K."/>
            <person name="Mottagui-Tabar S."/>
            <person name="Mulder N."/>
            <person name="Nakano N."/>
            <person name="Nakauchi H."/>
            <person name="Ng P."/>
            <person name="Nilsson R."/>
            <person name="Nishiguchi S."/>
            <person name="Nishikawa S."/>
            <person name="Nori F."/>
            <person name="Ohara O."/>
            <person name="Okazaki Y."/>
            <person name="Orlando V."/>
            <person name="Pang K.C."/>
            <person name="Pavan W.J."/>
            <person name="Pavesi G."/>
            <person name="Pesole G."/>
            <person name="Petrovsky N."/>
            <person name="Piazza S."/>
            <person name="Reed J."/>
            <person name="Reid J.F."/>
            <person name="Ring B.Z."/>
            <person name="Ringwald M."/>
            <person name="Rost B."/>
            <person name="Ruan Y."/>
            <person name="Salzberg S.L."/>
            <person name="Sandelin A."/>
            <person name="Schneider C."/>
            <person name="Schoenbach C."/>
            <person name="Sekiguchi K."/>
            <person name="Semple C.A."/>
            <person name="Seno S."/>
            <person name="Sessa L."/>
            <person name="Sheng Y."/>
            <person name="Shibata Y."/>
            <person name="Shimada H."/>
            <person name="Shimada K."/>
            <person name="Silva D."/>
            <person name="Sinclair B."/>
            <person name="Sperling S."/>
            <person name="Stupka E."/>
            <person name="Sugiura K."/>
            <person name="Sultana R."/>
            <person name="Takenaka Y."/>
            <person name="Taki K."/>
            <person name="Tammoja K."/>
            <person name="Tan S.L."/>
            <person name="Tang S."/>
            <person name="Taylor M.S."/>
            <person name="Tegner J."/>
            <person name="Teichmann S.A."/>
            <person name="Ueda H.R."/>
            <person name="van Nimwegen E."/>
            <person name="Verardo R."/>
            <person name="Wei C.L."/>
            <person name="Yagi K."/>
            <person name="Yamanishi H."/>
            <person name="Zabarovsky E."/>
            <person name="Zhu S."/>
            <person name="Zimmer A."/>
            <person name="Hide W."/>
            <person name="Bult C."/>
            <person name="Grimmond S.M."/>
            <person name="Teasdale R.D."/>
            <person name="Liu E.T."/>
            <person name="Brusic V."/>
            <person name="Quackenbush J."/>
            <person name="Wahlestedt C."/>
            <person name="Mattick J.S."/>
            <person name="Hume D.A."/>
            <person name="Kai C."/>
            <person name="Sasaki D."/>
            <person name="Tomaru Y."/>
            <person name="Fukuda S."/>
            <person name="Kanamori-Katayama M."/>
            <person name="Suzuki M."/>
            <person name="Aoki J."/>
            <person name="Arakawa T."/>
            <person name="Iida J."/>
            <person name="Imamura K."/>
            <person name="Itoh M."/>
            <person name="Kato T."/>
            <person name="Kawaji H."/>
            <person name="Kawagashira N."/>
            <person name="Kawashima T."/>
            <person name="Kojima M."/>
            <person name="Kondo S."/>
            <person name="Konno H."/>
            <person name="Nakano K."/>
            <person name="Ninomiya N."/>
            <person name="Nishio T."/>
            <person name="Okada M."/>
            <person name="Plessy C."/>
            <person name="Shibata K."/>
            <person name="Shiraki T."/>
            <person name="Suzuki S."/>
            <person name="Tagami M."/>
            <person name="Waki K."/>
            <person name="Watahiki A."/>
            <person name="Okamura-Oho Y."/>
            <person name="Suzuki H."/>
            <person name="Kawai J."/>
            <person name="Hayashizaki Y."/>
        </authorList>
    </citation>
    <scope>NUCLEOTIDE SEQUENCE [LARGE SCALE MRNA] (ISOFORM 1)</scope>
    <source>
        <strain>C57BL/6J</strain>
        <tissue>Head</tissue>
    </source>
</reference>
<reference key="3">
    <citation type="journal article" date="2004" name="Genome Res.">
        <title>The status, quality, and expansion of the NIH full-length cDNA project: the Mammalian Gene Collection (MGC).</title>
        <authorList>
            <consortium name="The MGC Project Team"/>
        </authorList>
    </citation>
    <scope>NUCLEOTIDE SEQUENCE [LARGE SCALE MRNA] (ISOFORM 1)</scope>
    <source>
        <tissue>Brain</tissue>
    </source>
</reference>
<reference key="4">
    <citation type="journal article" date="2004" name="Blood">
        <title>A TREM family member, TLT-1, is found exclusively in the alpha-granules of megakaryocytes and platelets.</title>
        <authorList>
            <person name="Washington A.V."/>
            <person name="Schubert R.L."/>
            <person name="Quigley L."/>
            <person name="Disipio T."/>
            <person name="Feltz R."/>
            <person name="Cho E.H."/>
            <person name="McVicar D.W."/>
        </authorList>
    </citation>
    <scope>SUBCELLULAR LOCATION</scope>
    <scope>TISSUE SPECIFICITY</scope>
</reference>
<reference key="5">
    <citation type="journal article" date="2007" name="Proc. Natl. Acad. Sci. U.S.A.">
        <title>Large-scale phosphorylation analysis of mouse liver.</title>
        <authorList>
            <person name="Villen J."/>
            <person name="Beausoleil S.A."/>
            <person name="Gerber S.A."/>
            <person name="Gygi S.P."/>
        </authorList>
    </citation>
    <scope>IDENTIFICATION BY MASS SPECTROMETRY [LARGE SCALE ANALYSIS]</scope>
    <source>
        <tissue>Liver</tissue>
    </source>
</reference>
<reference key="6">
    <citation type="journal article" date="2010" name="Cell">
        <title>A tissue-specific atlas of mouse protein phosphorylation and expression.</title>
        <authorList>
            <person name="Huttlin E.L."/>
            <person name="Jedrychowski M.P."/>
            <person name="Elias J.E."/>
            <person name="Goswami T."/>
            <person name="Rad R."/>
            <person name="Beausoleil S.A."/>
            <person name="Villen J."/>
            <person name="Haas W."/>
            <person name="Sowa M.E."/>
            <person name="Gygi S.P."/>
        </authorList>
    </citation>
    <scope>PHOSPHORYLATION [LARGE SCALE ANALYSIS] AT SER-283</scope>
    <scope>IDENTIFICATION BY MASS SPECTROMETRY [LARGE SCALE ANALYSIS]</scope>
    <source>
        <tissue>Lung</tissue>
        <tissue>Spleen</tissue>
    </source>
</reference>
<organism>
    <name type="scientific">Mus musculus</name>
    <name type="common">Mouse</name>
    <dbReference type="NCBI Taxonomy" id="10090"/>
    <lineage>
        <taxon>Eukaryota</taxon>
        <taxon>Metazoa</taxon>
        <taxon>Chordata</taxon>
        <taxon>Craniata</taxon>
        <taxon>Vertebrata</taxon>
        <taxon>Euteleostomi</taxon>
        <taxon>Mammalia</taxon>
        <taxon>Eutheria</taxon>
        <taxon>Euarchontoglires</taxon>
        <taxon>Glires</taxon>
        <taxon>Rodentia</taxon>
        <taxon>Myomorpha</taxon>
        <taxon>Muroidea</taxon>
        <taxon>Muridae</taxon>
        <taxon>Murinae</taxon>
        <taxon>Mus</taxon>
        <taxon>Mus</taxon>
    </lineage>
</organism>
<protein>
    <recommendedName>
        <fullName>Trem-like transcript 1 protein</fullName>
        <shortName>TLT-1</shortName>
    </recommendedName>
    <alternativeName>
        <fullName>Triggering receptor expressed on myeloid cells-like protein 1</fullName>
    </alternativeName>
</protein>
<name>TRML1_MOUSE</name>
<accession>Q8K558</accession>
<accession>B2RRH0</accession>
<accession>Q9D3N6</accession>
<proteinExistence type="evidence at protein level"/>
<feature type="signal peptide" evidence="3">
    <location>
        <begin position="1"/>
        <end position="20"/>
    </location>
</feature>
<feature type="chain" id="PRO_0000253856" description="Trem-like transcript 1 protein">
    <location>
        <begin position="21"/>
        <end position="317"/>
    </location>
</feature>
<feature type="topological domain" description="Extracellular" evidence="3">
    <location>
        <begin position="21"/>
        <end position="175"/>
    </location>
</feature>
<feature type="transmembrane region" description="Helical" evidence="3">
    <location>
        <begin position="176"/>
        <end position="196"/>
    </location>
</feature>
<feature type="topological domain" description="Cytoplasmic" evidence="3">
    <location>
        <begin position="197"/>
        <end position="317"/>
    </location>
</feature>
<feature type="domain" description="Ig-like V-type">
    <location>
        <begin position="21"/>
        <end position="122"/>
    </location>
</feature>
<feature type="region of interest" description="Disordered" evidence="4">
    <location>
        <begin position="147"/>
        <end position="166"/>
    </location>
</feature>
<feature type="region of interest" description="Disordered" evidence="4">
    <location>
        <begin position="212"/>
        <end position="278"/>
    </location>
</feature>
<feature type="region of interest" description="Disordered" evidence="4">
    <location>
        <begin position="295"/>
        <end position="317"/>
    </location>
</feature>
<feature type="short sequence motif" description="ITIM">
    <location>
        <begin position="284"/>
        <end position="289"/>
    </location>
</feature>
<feature type="compositionally biased region" description="Pro residues" evidence="4">
    <location>
        <begin position="261"/>
        <end position="275"/>
    </location>
</feature>
<feature type="compositionally biased region" description="Polar residues" evidence="4">
    <location>
        <begin position="308"/>
        <end position="317"/>
    </location>
</feature>
<feature type="modified residue" description="Phosphoserine" evidence="8">
    <location>
        <position position="283"/>
    </location>
</feature>
<feature type="lipid moiety-binding region" description="S-palmitoyl cysteine" evidence="1">
    <location>
        <position position="208"/>
    </location>
</feature>
<feature type="disulfide bond" evidence="1">
    <location>
        <begin position="39"/>
        <end position="105"/>
    </location>
</feature>
<feature type="disulfide bond" evidence="1">
    <location>
        <begin position="53"/>
        <end position="60"/>
    </location>
</feature>
<feature type="splice variant" id="VSP_021127" description="In isoform 2." evidence="7">
    <original>S</original>
    <variation>RCQKQC</variation>
    <location>
        <position position="173"/>
    </location>
</feature>
<comment type="function">
    <text evidence="5">Cell surface receptor that may play a role in the innate and adaptive immune response.</text>
</comment>
<comment type="subunit">
    <text evidence="1 5">When phosphorylated, interacts with PTPN11 (By similarity). When phosphorylated, interacts with PTPN6.</text>
</comment>
<comment type="subcellular location">
    <subcellularLocation>
        <location evidence="6">Cell membrane</location>
        <topology evidence="6">Single-pass type I membrane protein</topology>
    </subcellularLocation>
    <subcellularLocation>
        <location evidence="6">Cytoplasm</location>
    </subcellularLocation>
    <text evidence="2">Sequestered in cytoplasmic vesicles in resting platelets. Transported to the cell surface after stimulation by thrombin. Soluble fragments can be released into the serum by proteolysis.</text>
</comment>
<comment type="alternative products">
    <event type="alternative splicing"/>
    <isoform>
        <id>Q8K558-1</id>
        <name>1</name>
        <sequence type="displayed"/>
    </isoform>
    <isoform>
        <id>Q8K558-2</id>
        <name>2</name>
        <sequence type="described" ref="VSP_021127"/>
    </isoform>
</comment>
<comment type="tissue specificity">
    <text evidence="5 6">Highly expressed in bone marrow leukocytes, splenic megakaryocytes and platelets. Detected in brain, liver and in peritoneal monocytes.</text>
</comment>
<comment type="PTM">
    <text evidence="5">Phosphorylated on tyrosine residues.</text>
</comment>
<sequence>MDCYLLLLLLLLGLAGQGSADSHPEVLQAPVGSSILVQCHYRLQDVRALKVWCQFLQEGCHPLVTSAVDRRAPGNGRIFLTDLGGGLLQVEMVTLQEEDTGEYGCVVEGAAGPQTLHRVSLLVLPPVPGPREGEEAEDEKETYRIGTGSLLEDPSLDPSASAGPHEFRRRENSIPLIWGAVLLLALVVVAVVIFAVMARKKGNRLVVCGPSQSTGVPGMDPPSAAHRSSDSGLPSDIPHVRLDSPPSFDSIYTGSSLDPPSSEPPAPPSQPPLPPKVLMSSKSVTYATVVFPGGDKGKIASCEPVQDPPNSQTPPSK</sequence>
<keyword id="KW-0025">Alternative splicing</keyword>
<keyword id="KW-1003">Cell membrane</keyword>
<keyword id="KW-0963">Cytoplasm</keyword>
<keyword id="KW-1015">Disulfide bond</keyword>
<keyword id="KW-0393">Immunoglobulin domain</keyword>
<keyword id="KW-0449">Lipoprotein</keyword>
<keyword id="KW-0472">Membrane</keyword>
<keyword id="KW-0564">Palmitate</keyword>
<keyword id="KW-0597">Phosphoprotein</keyword>
<keyword id="KW-0675">Receptor</keyword>
<keyword id="KW-1185">Reference proteome</keyword>
<keyword id="KW-0732">Signal</keyword>
<keyword id="KW-0812">Transmembrane</keyword>
<keyword id="KW-1133">Transmembrane helix</keyword>